<comment type="function">
    <text evidence="1">Acts as a ribosome collision sensor. Detects stalled/collided disomes (pairs of ribosomes where the leading ribosome is stalled and a second ribosome has collided with it) and endonucleolytically cleaves mRNA at the 5' boundary of the stalled ribosome. Stalled/collided disomes form a new interface (primarily via the 30S subunits) that binds SmrB. Cleaved mRNA becomes available for tmRNA ligation, leading to ribosomal subunit dissociation and rescue of stalled ribosomes.</text>
</comment>
<comment type="subunit">
    <text evidence="1">Associates with collided ribosomes, but not with correctly translating polysomes.</text>
</comment>
<comment type="similarity">
    <text evidence="1">Belongs to the SmrB family.</text>
</comment>
<feature type="chain" id="PRO_1000136047" description="Ribosome rescue factor SmrB">
    <location>
        <begin position="1"/>
        <end position="183"/>
    </location>
</feature>
<feature type="domain" description="Smr" evidence="1">
    <location>
        <begin position="98"/>
        <end position="173"/>
    </location>
</feature>
<sequence>MKKKTSLSEEDQALFRQLMVGTRKIKQDTIVHRPLRKKITEVPTRRLIQEQADASHYFSDEFQPLLNTEGPVKYVREDVSHFELKKMRRGDYSPELFLDLHGLTQLQAKQELGALIAACRREHIFCACVMHGHGKHILKQQTPLWLAQHPHVMAFHQAPKEYGGDAALLVLIEVEEWQPPELP</sequence>
<protein>
    <recommendedName>
        <fullName evidence="1">Ribosome rescue factor SmrB</fullName>
        <ecNumber evidence="1">3.1.-.-</ecNumber>
    </recommendedName>
</protein>
<organism>
    <name type="scientific">Salmonella agona (strain SL483)</name>
    <dbReference type="NCBI Taxonomy" id="454166"/>
    <lineage>
        <taxon>Bacteria</taxon>
        <taxon>Pseudomonadati</taxon>
        <taxon>Pseudomonadota</taxon>
        <taxon>Gammaproteobacteria</taxon>
        <taxon>Enterobacterales</taxon>
        <taxon>Enterobacteriaceae</taxon>
        <taxon>Salmonella</taxon>
    </lineage>
</organism>
<reference key="1">
    <citation type="journal article" date="2011" name="J. Bacteriol.">
        <title>Comparative genomics of 28 Salmonella enterica isolates: evidence for CRISPR-mediated adaptive sublineage evolution.</title>
        <authorList>
            <person name="Fricke W.F."/>
            <person name="Mammel M.K."/>
            <person name="McDermott P.F."/>
            <person name="Tartera C."/>
            <person name="White D.G."/>
            <person name="Leclerc J.E."/>
            <person name="Ravel J."/>
            <person name="Cebula T.A."/>
        </authorList>
    </citation>
    <scope>NUCLEOTIDE SEQUENCE [LARGE SCALE GENOMIC DNA]</scope>
    <source>
        <strain>SL483</strain>
    </source>
</reference>
<proteinExistence type="inferred from homology"/>
<accession>B5EZR7</accession>
<evidence type="ECO:0000255" key="1">
    <source>
        <dbReference type="HAMAP-Rule" id="MF_01042"/>
    </source>
</evidence>
<keyword id="KW-0255">Endonuclease</keyword>
<keyword id="KW-0378">Hydrolase</keyword>
<keyword id="KW-0540">Nuclease</keyword>
<keyword id="KW-0694">RNA-binding</keyword>
<keyword id="KW-0699">rRNA-binding</keyword>
<gene>
    <name evidence="1" type="primary">smrB</name>
    <name type="ordered locus">SeAg_B2526</name>
</gene>
<dbReference type="EC" id="3.1.-.-" evidence="1"/>
<dbReference type="EMBL" id="CP001138">
    <property type="protein sequence ID" value="ACH48934.1"/>
    <property type="molecule type" value="Genomic_DNA"/>
</dbReference>
<dbReference type="RefSeq" id="WP_000730794.1">
    <property type="nucleotide sequence ID" value="NC_011149.1"/>
</dbReference>
<dbReference type="SMR" id="B5EZR7"/>
<dbReference type="KEGG" id="sea:SeAg_B2526"/>
<dbReference type="HOGENOM" id="CLU_055978_4_0_6"/>
<dbReference type="Proteomes" id="UP000008819">
    <property type="component" value="Chromosome"/>
</dbReference>
<dbReference type="GO" id="GO:0004521">
    <property type="term" value="F:RNA endonuclease activity"/>
    <property type="evidence" value="ECO:0007669"/>
    <property type="project" value="UniProtKB-UniRule"/>
</dbReference>
<dbReference type="GO" id="GO:0019843">
    <property type="term" value="F:rRNA binding"/>
    <property type="evidence" value="ECO:0007669"/>
    <property type="project" value="UniProtKB-UniRule"/>
</dbReference>
<dbReference type="GO" id="GO:0072344">
    <property type="term" value="P:rescue of stalled ribosome"/>
    <property type="evidence" value="ECO:0007669"/>
    <property type="project" value="UniProtKB-UniRule"/>
</dbReference>
<dbReference type="Gene3D" id="3.30.1370.110">
    <property type="match status" value="1"/>
</dbReference>
<dbReference type="HAMAP" id="MF_01042">
    <property type="entry name" value="SmrB"/>
    <property type="match status" value="1"/>
</dbReference>
<dbReference type="InterPro" id="IPR002625">
    <property type="entry name" value="Smr_dom"/>
</dbReference>
<dbReference type="InterPro" id="IPR036063">
    <property type="entry name" value="Smr_dom_sf"/>
</dbReference>
<dbReference type="InterPro" id="IPR022990">
    <property type="entry name" value="SmrB-like"/>
</dbReference>
<dbReference type="NCBIfam" id="NF003432">
    <property type="entry name" value="PRK04946.1"/>
    <property type="match status" value="1"/>
</dbReference>
<dbReference type="PANTHER" id="PTHR35562">
    <property type="entry name" value="DNA ENDONUCLEASE SMRA-RELATED"/>
    <property type="match status" value="1"/>
</dbReference>
<dbReference type="PANTHER" id="PTHR35562:SF1">
    <property type="entry name" value="UPF0115 PROTEIN YFCN"/>
    <property type="match status" value="1"/>
</dbReference>
<dbReference type="Pfam" id="PF01713">
    <property type="entry name" value="Smr"/>
    <property type="match status" value="1"/>
</dbReference>
<dbReference type="SMART" id="SM00463">
    <property type="entry name" value="SMR"/>
    <property type="match status" value="1"/>
</dbReference>
<dbReference type="SUPFAM" id="SSF160443">
    <property type="entry name" value="SMR domain-like"/>
    <property type="match status" value="1"/>
</dbReference>
<dbReference type="PROSITE" id="PS50828">
    <property type="entry name" value="SMR"/>
    <property type="match status" value="1"/>
</dbReference>
<name>SMRB_SALA4</name>